<sequence>MPKMKTNRGASKRFKVKKNLIKRGSAFKSHILTKKSPKRKANLNAPKHVHHTNAHSVMSLLCRA</sequence>
<keyword id="KW-1185">Reference proteome</keyword>
<keyword id="KW-0687">Ribonucleoprotein</keyword>
<keyword id="KW-0689">Ribosomal protein</keyword>
<protein>
    <recommendedName>
        <fullName evidence="1">Large ribosomal subunit protein bL35</fullName>
    </recommendedName>
    <alternativeName>
        <fullName evidence="3">50S ribosomal protein L35</fullName>
    </alternativeName>
</protein>
<accession>B5Z9Q3</accession>
<comment type="similarity">
    <text evidence="1">Belongs to the bacterial ribosomal protein bL35 family.</text>
</comment>
<gene>
    <name evidence="1" type="primary">rpmI</name>
    <name type="ordered locus">HPG27_114</name>
</gene>
<organism>
    <name type="scientific">Helicobacter pylori (strain G27)</name>
    <dbReference type="NCBI Taxonomy" id="563041"/>
    <lineage>
        <taxon>Bacteria</taxon>
        <taxon>Pseudomonadati</taxon>
        <taxon>Campylobacterota</taxon>
        <taxon>Epsilonproteobacteria</taxon>
        <taxon>Campylobacterales</taxon>
        <taxon>Helicobacteraceae</taxon>
        <taxon>Helicobacter</taxon>
    </lineage>
</organism>
<evidence type="ECO:0000255" key="1">
    <source>
        <dbReference type="HAMAP-Rule" id="MF_00514"/>
    </source>
</evidence>
<evidence type="ECO:0000256" key="2">
    <source>
        <dbReference type="SAM" id="MobiDB-lite"/>
    </source>
</evidence>
<evidence type="ECO:0000305" key="3"/>
<reference key="1">
    <citation type="journal article" date="2009" name="J. Bacteriol.">
        <title>The complete genome sequence of Helicobacter pylori strain G27.</title>
        <authorList>
            <person name="Baltrus D.A."/>
            <person name="Amieva M.R."/>
            <person name="Covacci A."/>
            <person name="Lowe T.M."/>
            <person name="Merrell D.S."/>
            <person name="Ottemann K.M."/>
            <person name="Stein M."/>
            <person name="Salama N.R."/>
            <person name="Guillemin K."/>
        </authorList>
    </citation>
    <scope>NUCLEOTIDE SEQUENCE [LARGE SCALE GENOMIC DNA]</scope>
    <source>
        <strain>G27</strain>
    </source>
</reference>
<name>RL35_HELPG</name>
<dbReference type="EMBL" id="CP001173">
    <property type="protein sequence ID" value="ACI26883.1"/>
    <property type="molecule type" value="Genomic_DNA"/>
</dbReference>
<dbReference type="RefSeq" id="WP_001125542.1">
    <property type="nucleotide sequence ID" value="NC_011333.1"/>
</dbReference>
<dbReference type="SMR" id="B5Z9Q3"/>
<dbReference type="GeneID" id="93236496"/>
<dbReference type="KEGG" id="hpg:HPG27_114"/>
<dbReference type="HOGENOM" id="CLU_169643_1_2_7"/>
<dbReference type="Proteomes" id="UP000001735">
    <property type="component" value="Chromosome"/>
</dbReference>
<dbReference type="GO" id="GO:0022625">
    <property type="term" value="C:cytosolic large ribosomal subunit"/>
    <property type="evidence" value="ECO:0007669"/>
    <property type="project" value="TreeGrafter"/>
</dbReference>
<dbReference type="GO" id="GO:0003735">
    <property type="term" value="F:structural constituent of ribosome"/>
    <property type="evidence" value="ECO:0007669"/>
    <property type="project" value="InterPro"/>
</dbReference>
<dbReference type="GO" id="GO:0006412">
    <property type="term" value="P:translation"/>
    <property type="evidence" value="ECO:0007669"/>
    <property type="project" value="UniProtKB-UniRule"/>
</dbReference>
<dbReference type="FunFam" id="4.10.410.60:FF:000001">
    <property type="entry name" value="50S ribosomal protein L35"/>
    <property type="match status" value="1"/>
</dbReference>
<dbReference type="Gene3D" id="4.10.410.60">
    <property type="match status" value="1"/>
</dbReference>
<dbReference type="HAMAP" id="MF_00514">
    <property type="entry name" value="Ribosomal_bL35"/>
    <property type="match status" value="1"/>
</dbReference>
<dbReference type="InterPro" id="IPR001706">
    <property type="entry name" value="Ribosomal_bL35"/>
</dbReference>
<dbReference type="InterPro" id="IPR021137">
    <property type="entry name" value="Ribosomal_bL35-like"/>
</dbReference>
<dbReference type="InterPro" id="IPR018265">
    <property type="entry name" value="Ribosomal_bL35_CS"/>
</dbReference>
<dbReference type="InterPro" id="IPR037229">
    <property type="entry name" value="Ribosomal_bL35_sf"/>
</dbReference>
<dbReference type="NCBIfam" id="TIGR00001">
    <property type="entry name" value="rpmI_bact"/>
    <property type="match status" value="1"/>
</dbReference>
<dbReference type="PANTHER" id="PTHR33343">
    <property type="entry name" value="54S RIBOSOMAL PROTEIN BL35M"/>
    <property type="match status" value="1"/>
</dbReference>
<dbReference type="PANTHER" id="PTHR33343:SF1">
    <property type="entry name" value="LARGE RIBOSOMAL SUBUNIT PROTEIN BL35M"/>
    <property type="match status" value="1"/>
</dbReference>
<dbReference type="Pfam" id="PF01632">
    <property type="entry name" value="Ribosomal_L35p"/>
    <property type="match status" value="1"/>
</dbReference>
<dbReference type="PRINTS" id="PR00064">
    <property type="entry name" value="RIBOSOMALL35"/>
</dbReference>
<dbReference type="SUPFAM" id="SSF143034">
    <property type="entry name" value="L35p-like"/>
    <property type="match status" value="1"/>
</dbReference>
<dbReference type="PROSITE" id="PS00936">
    <property type="entry name" value="RIBOSOMAL_L35"/>
    <property type="match status" value="1"/>
</dbReference>
<proteinExistence type="inferred from homology"/>
<feature type="chain" id="PRO_1000127362" description="Large ribosomal subunit protein bL35">
    <location>
        <begin position="1"/>
        <end position="64"/>
    </location>
</feature>
<feature type="region of interest" description="Disordered" evidence="2">
    <location>
        <begin position="38"/>
        <end position="64"/>
    </location>
</feature>
<feature type="compositionally biased region" description="Basic residues" evidence="2">
    <location>
        <begin position="38"/>
        <end position="53"/>
    </location>
</feature>